<feature type="chain" id="PRO_0000299648" description="Putative uncharacterized protein YLR416C">
    <location>
        <begin position="1"/>
        <end position="132"/>
    </location>
</feature>
<feature type="region of interest" description="Disordered" evidence="1">
    <location>
        <begin position="113"/>
        <end position="132"/>
    </location>
</feature>
<reference key="1">
    <citation type="journal article" date="1997" name="Nature">
        <title>The nucleotide sequence of Saccharomyces cerevisiae chromosome XII.</title>
        <authorList>
            <person name="Johnston M."/>
            <person name="Hillier L.W."/>
            <person name="Riles L."/>
            <person name="Albermann K."/>
            <person name="Andre B."/>
            <person name="Ansorge W."/>
            <person name="Benes V."/>
            <person name="Brueckner M."/>
            <person name="Delius H."/>
            <person name="Dubois E."/>
            <person name="Duesterhoeft A."/>
            <person name="Entian K.-D."/>
            <person name="Floeth M."/>
            <person name="Goffeau A."/>
            <person name="Hebling U."/>
            <person name="Heumann K."/>
            <person name="Heuss-Neitzel D."/>
            <person name="Hilbert H."/>
            <person name="Hilger F."/>
            <person name="Kleine K."/>
            <person name="Koetter P."/>
            <person name="Louis E.J."/>
            <person name="Messenguy F."/>
            <person name="Mewes H.-W."/>
            <person name="Miosga T."/>
            <person name="Moestl D."/>
            <person name="Mueller-Auer S."/>
            <person name="Nentwich U."/>
            <person name="Obermaier B."/>
            <person name="Piravandi E."/>
            <person name="Pohl T.M."/>
            <person name="Portetelle D."/>
            <person name="Purnelle B."/>
            <person name="Rechmann S."/>
            <person name="Rieger M."/>
            <person name="Rinke M."/>
            <person name="Rose M."/>
            <person name="Scharfe M."/>
            <person name="Scherens B."/>
            <person name="Scholler P."/>
            <person name="Schwager C."/>
            <person name="Schwarz S."/>
            <person name="Underwood A.P."/>
            <person name="Urrestarazu L.A."/>
            <person name="Vandenbol M."/>
            <person name="Verhasselt P."/>
            <person name="Vierendeels F."/>
            <person name="Voet M."/>
            <person name="Volckaert G."/>
            <person name="Voss H."/>
            <person name="Wambutt R."/>
            <person name="Wedler E."/>
            <person name="Wedler H."/>
            <person name="Zimmermann F.K."/>
            <person name="Zollner A."/>
            <person name="Hani J."/>
            <person name="Hoheisel J.D."/>
        </authorList>
    </citation>
    <scope>NUCLEOTIDE SEQUENCE [LARGE SCALE GENOMIC DNA]</scope>
    <source>
        <strain>ATCC 204508 / S288c</strain>
    </source>
</reference>
<reference key="2">
    <citation type="journal article" date="2014" name="G3 (Bethesda)">
        <title>The reference genome sequence of Saccharomyces cerevisiae: Then and now.</title>
        <authorList>
            <person name="Engel S.R."/>
            <person name="Dietrich F.S."/>
            <person name="Fisk D.G."/>
            <person name="Binkley G."/>
            <person name="Balakrishnan R."/>
            <person name="Costanzo M.C."/>
            <person name="Dwight S.S."/>
            <person name="Hitz B.C."/>
            <person name="Karra K."/>
            <person name="Nash R.S."/>
            <person name="Weng S."/>
            <person name="Wong E.D."/>
            <person name="Lloyd P."/>
            <person name="Skrzypek M.S."/>
            <person name="Miyasato S.R."/>
            <person name="Simison M."/>
            <person name="Cherry J.M."/>
        </authorList>
    </citation>
    <scope>GENOME REANNOTATION</scope>
    <source>
        <strain>ATCC 204508 / S288c</strain>
    </source>
</reference>
<evidence type="ECO:0000256" key="1">
    <source>
        <dbReference type="SAM" id="MobiDB-lite"/>
    </source>
</evidence>
<evidence type="ECO:0000305" key="2"/>
<evidence type="ECO:0000305" key="3">
    <source>
    </source>
</evidence>
<dbReference type="EMBL" id="U20162">
    <property type="protein sequence ID" value="AAB67499.1"/>
    <property type="molecule type" value="Genomic_DNA"/>
</dbReference>
<dbReference type="PIR" id="S59381">
    <property type="entry name" value="S59381"/>
</dbReference>
<dbReference type="DIP" id="DIP-4639N"/>
<dbReference type="PaxDb" id="4932-YLR416C"/>
<dbReference type="EnsemblFungi" id="YLR416C_mRNA">
    <property type="protein sequence ID" value="YLR416C"/>
    <property type="gene ID" value="YLR416C"/>
</dbReference>
<dbReference type="AGR" id="SGD:S000004408"/>
<dbReference type="SGD" id="S000004408">
    <property type="gene designation" value="YLR416C"/>
</dbReference>
<dbReference type="HOGENOM" id="CLU_1918707_0_0_1"/>
<proteinExistence type="uncertain"/>
<name>YL416_YEAST</name>
<gene>
    <name type="ordered locus">YLR416C</name>
    <name type="ORF">L9931.9</name>
</gene>
<comment type="miscellaneous">
    <text evidence="2">Partially overlaps YLR415C.</text>
</comment>
<comment type="caution">
    <text evidence="3">Product of a dubious gene prediction unlikely to encode a functional protein. Because of that it is not part of the S.cerevisiae S288c complete/reference proteome set.</text>
</comment>
<accession>Q06695</accession>
<organism>
    <name type="scientific">Saccharomyces cerevisiae (strain ATCC 204508 / S288c)</name>
    <name type="common">Baker's yeast</name>
    <dbReference type="NCBI Taxonomy" id="559292"/>
    <lineage>
        <taxon>Eukaryota</taxon>
        <taxon>Fungi</taxon>
        <taxon>Dikarya</taxon>
        <taxon>Ascomycota</taxon>
        <taxon>Saccharomycotina</taxon>
        <taxon>Saccharomycetes</taxon>
        <taxon>Saccharomycetales</taxon>
        <taxon>Saccharomycetaceae</taxon>
        <taxon>Saccharomyces</taxon>
    </lineage>
</organism>
<sequence>MKHVKPFFLFVDPKKSASGKQGEASSHGKGFLICRYASFPLHTESKVVRFANVTDQKFGHALSFFFSYIHCTRHVGSAPLTVSQPHIDVHCEQPISFHVSQCPAYENCHSLPLDPQSPLHSPPLSTSPDSRR</sequence>
<protein>
    <recommendedName>
        <fullName>Putative uncharacterized protein YLR416C</fullName>
    </recommendedName>
</protein>